<name>DLGP5_HUMAN</name>
<comment type="function">
    <text evidence="3 4 5">Potential cell cycle regulator that may play a role in carcinogenesis of cancer cells. Mitotic phosphoprotein regulated by the ubiquitin-proteasome pathway. Key regulator of adherens junction integrity and differentiation that may be involved in CDH1-mediated adhesion and signaling in epithelial cells.</text>
</comment>
<comment type="subunit">
    <text evidence="4 5">Interacts with CDK1. Interacts with the C-terminal proline-rich region of FBXO7. Recruited by FBXO7 to a SCF (SKP1-CUL1-F-box) protein complex in a CDK1/Cyclin B-phosphorylation dependent manner. Interacts with CDH1.</text>
</comment>
<comment type="interaction">
    <interactant intactId="EBI-748280">
        <id>Q15398</id>
    </interactant>
    <interactant intactId="EBI-354967">
        <id>Q00610</id>
        <label>CLTC</label>
    </interactant>
    <organismsDiffer>false</organismsDiffer>
    <experiments>4</experiments>
</comment>
<comment type="interaction">
    <interactant intactId="EBI-748280">
        <id>Q15398</id>
    </interactant>
    <interactant intactId="EBI-618309">
        <id>Q08379</id>
        <label>GOLGA2</label>
    </interactant>
    <organismsDiffer>false</organismsDiffer>
    <experiments>3</experiments>
</comment>
<comment type="interaction">
    <interactant intactId="EBI-748280">
        <id>Q15398</id>
    </interactant>
    <interactant intactId="EBI-742948">
        <id>Q5JR59</id>
        <label>MTUS2</label>
    </interactant>
    <organismsDiffer>false</organismsDiffer>
    <experiments>3</experiments>
</comment>
<comment type="subcellular location">
    <subcellularLocation>
        <location>Nucleus</location>
    </subcellularLocation>
    <subcellularLocation>
        <location>Cytoplasm</location>
    </subcellularLocation>
    <subcellularLocation>
        <location>Cytoplasm</location>
        <location>Cytoskeleton</location>
        <location>Spindle</location>
    </subcellularLocation>
    <text>Localizes to the spindle in mitotic cells. Colocalizes with CDH1 at sites of cell-cell contact in intestinal epithelial cells.</text>
</comment>
<comment type="alternative products">
    <event type="alternative splicing"/>
    <isoform>
        <id>Q15398-2</id>
        <name>1</name>
        <sequence type="displayed"/>
    </isoform>
    <isoform>
        <id>Q15398-1</id>
        <name>2</name>
        <sequence type="described" ref="VSP_015550"/>
    </isoform>
    <isoform>
        <id>Q15398-3</id>
        <name>3</name>
        <sequence type="described" ref="VSP_045341"/>
    </isoform>
</comment>
<comment type="tissue specificity">
    <text evidence="3">Abundantly expressed in fetal liver. Expressed at lower levels in bone marrow, testis, colon, and placenta.</text>
</comment>
<comment type="developmental stage">
    <text evidence="3">Elevated levels of expression detected in the G2/M phase of synchronized cultures of HeLa cells.</text>
</comment>
<comment type="PTM">
    <text evidence="5">Ubiquitinated, leading to its degradation.</text>
</comment>
<comment type="PTM">
    <text evidence="4 5 6">Decreased phosphorylation levels are associated with the differentiation of intestinal epithelial cells.</text>
</comment>
<comment type="similarity">
    <text evidence="9">Belongs to the SAPAP family.</text>
</comment>
<comment type="caution">
    <text evidence="10 11">It was localized to the spindle and the spindle pole (PubMed:12527899) but was later found to be localized to the spindle and to be excluded from the spindle pole (PubMed:15561729).</text>
</comment>
<comment type="sequence caution" evidence="9">
    <conflict type="erroneous initiation">
        <sequence resource="EMBL-CDS" id="BAA02797"/>
    </conflict>
    <text>Extended N-terminus.</text>
</comment>
<comment type="sequence caution" evidence="9">
    <conflict type="erroneous initiation">
        <sequence resource="EMBL-CDS" id="CAD62583"/>
    </conflict>
    <text>Extended N-terminus.</text>
</comment>
<evidence type="ECO:0000255" key="1"/>
<evidence type="ECO:0000256" key="2">
    <source>
        <dbReference type="SAM" id="MobiDB-lite"/>
    </source>
</evidence>
<evidence type="ECO:0000269" key="3">
    <source>
    </source>
</evidence>
<evidence type="ECO:0000269" key="4">
    <source>
    </source>
</evidence>
<evidence type="ECO:0000269" key="5">
    <source>
    </source>
</evidence>
<evidence type="ECO:0000269" key="6">
    <source>
    </source>
</evidence>
<evidence type="ECO:0000303" key="7">
    <source>
    </source>
</evidence>
<evidence type="ECO:0000303" key="8">
    <source ref="5"/>
</evidence>
<evidence type="ECO:0000305" key="9"/>
<evidence type="ECO:0000305" key="10">
    <source>
    </source>
</evidence>
<evidence type="ECO:0000305" key="11">
    <source>
    </source>
</evidence>
<evidence type="ECO:0007744" key="12">
    <source>
    </source>
</evidence>
<evidence type="ECO:0007744" key="13">
    <source>
    </source>
</evidence>
<evidence type="ECO:0007744" key="14">
    <source>
    </source>
</evidence>
<evidence type="ECO:0007744" key="15">
    <source>
    </source>
</evidence>
<evidence type="ECO:0007744" key="16">
    <source>
    </source>
</evidence>
<evidence type="ECO:0007744" key="17">
    <source>
    </source>
</evidence>
<evidence type="ECO:0007744" key="18">
    <source>
    </source>
</evidence>
<evidence type="ECO:0007829" key="19">
    <source>
        <dbReference type="PDB" id="9DUQ"/>
    </source>
</evidence>
<proteinExistence type="evidence at protein level"/>
<keyword id="KW-0002">3D-structure</keyword>
<keyword id="KW-0025">Alternative splicing</keyword>
<keyword id="KW-0131">Cell cycle</keyword>
<keyword id="KW-0175">Coiled coil</keyword>
<keyword id="KW-0963">Cytoplasm</keyword>
<keyword id="KW-0206">Cytoskeleton</keyword>
<keyword id="KW-1017">Isopeptide bond</keyword>
<keyword id="KW-0539">Nucleus</keyword>
<keyword id="KW-0597">Phosphoprotein</keyword>
<keyword id="KW-1267">Proteomics identification</keyword>
<keyword id="KW-1185">Reference proteome</keyword>
<keyword id="KW-0832">Ubl conjugation</keyword>
<reference key="1">
    <citation type="journal article" date="2003" name="Oncogene">
        <title>Identification of a novel cell cycle regulated gene, HURP, overexpressed in human hepatocellular carcinoma.</title>
        <authorList>
            <person name="Tsou A.-P."/>
            <person name="Yang C.-W."/>
            <person name="Huang C.-Y.F."/>
            <person name="Yu R.C.-T."/>
            <person name="Lee Y.-C.G."/>
            <person name="Chang C.-W."/>
            <person name="Chen B.-R."/>
            <person name="Chung Y.-F."/>
            <person name="Fann M.-J."/>
            <person name="Chi C.-W."/>
            <person name="Chiu J.-H."/>
            <person name="Chou C.-K."/>
        </authorList>
    </citation>
    <scope>NUCLEOTIDE SEQUENCE [MRNA] (ISOFORM 1)</scope>
    <scope>VARIANT GLU-69</scope>
    <scope>FUNCTION</scope>
    <scope>SUBCELLULAR LOCATION</scope>
    <scope>TISSUE SPECIFICITY</scope>
    <scope>DEVELOPMENTAL STAGE</scope>
</reference>
<reference key="2">
    <citation type="journal article" date="1994" name="DNA Res.">
        <title>Prediction of the coding sequences of unidentified human genes. I. The coding sequences of 40 new genes (KIAA0001-KIAA0040) deduced by analysis of randomly sampled cDNA clones from human immature myeloid cell line KG-1.</title>
        <authorList>
            <person name="Nomura N."/>
            <person name="Miyajima N."/>
            <person name="Sazuka T."/>
            <person name="Tanaka A."/>
            <person name="Kawarabayasi Y."/>
            <person name="Sato S."/>
            <person name="Nagase T."/>
            <person name="Seki N."/>
            <person name="Ishikawa K."/>
            <person name="Tabata S."/>
        </authorList>
    </citation>
    <scope>NUCLEOTIDE SEQUENCE [LARGE SCALE MRNA] (ISOFORM 1)</scope>
    <source>
        <tissue>Bone marrow</tissue>
    </source>
</reference>
<reference key="3">
    <citation type="submission" date="2003-01" db="EMBL/GenBank/DDBJ databases">
        <authorList>
            <person name="Ohara O."/>
            <person name="Nagase T."/>
            <person name="Kikuno R."/>
            <person name="Nomura N."/>
        </authorList>
    </citation>
    <scope>SEQUENCE REVISION TO 253</scope>
</reference>
<reference key="4">
    <citation type="submission" date="2003-02" db="EMBL/GenBank/DDBJ databases">
        <title>Full-length cDNA libraries and normalization.</title>
        <authorList>
            <person name="Li W.B."/>
            <person name="Gruber C."/>
            <person name="Jessee J."/>
            <person name="Polayes D."/>
        </authorList>
    </citation>
    <scope>NUCLEOTIDE SEQUENCE [LARGE SCALE MRNA]</scope>
    <source>
        <tissue>T-cell</tissue>
    </source>
</reference>
<reference key="5">
    <citation type="submission" date="2003-05" db="EMBL/GenBank/DDBJ databases">
        <title>Cloning of human full-length CDSs in BD Creator(TM) system donor vector.</title>
        <authorList>
            <person name="Kalnine N."/>
            <person name="Chen X."/>
            <person name="Rolfs A."/>
            <person name="Halleck A."/>
            <person name="Hines L."/>
            <person name="Eisenstein S."/>
            <person name="Koundinya M."/>
            <person name="Raphael J."/>
            <person name="Moreira D."/>
            <person name="Kelley T."/>
            <person name="LaBaer J."/>
            <person name="Lin Y."/>
            <person name="Phelan M."/>
            <person name="Farmer A."/>
        </authorList>
    </citation>
    <scope>NUCLEOTIDE SEQUENCE [LARGE SCALE MRNA] (ISOFORM 2)</scope>
</reference>
<reference key="6">
    <citation type="journal article" date="2004" name="Nat. Genet.">
        <title>Complete sequencing and characterization of 21,243 full-length human cDNAs.</title>
        <authorList>
            <person name="Ota T."/>
            <person name="Suzuki Y."/>
            <person name="Nishikawa T."/>
            <person name="Otsuki T."/>
            <person name="Sugiyama T."/>
            <person name="Irie R."/>
            <person name="Wakamatsu A."/>
            <person name="Hayashi K."/>
            <person name="Sato H."/>
            <person name="Nagai K."/>
            <person name="Kimura K."/>
            <person name="Makita H."/>
            <person name="Sekine M."/>
            <person name="Obayashi M."/>
            <person name="Nishi T."/>
            <person name="Shibahara T."/>
            <person name="Tanaka T."/>
            <person name="Ishii S."/>
            <person name="Yamamoto J."/>
            <person name="Saito K."/>
            <person name="Kawai Y."/>
            <person name="Isono Y."/>
            <person name="Nakamura Y."/>
            <person name="Nagahari K."/>
            <person name="Murakami K."/>
            <person name="Yasuda T."/>
            <person name="Iwayanagi T."/>
            <person name="Wagatsuma M."/>
            <person name="Shiratori A."/>
            <person name="Sudo H."/>
            <person name="Hosoiri T."/>
            <person name="Kaku Y."/>
            <person name="Kodaira H."/>
            <person name="Kondo H."/>
            <person name="Sugawara M."/>
            <person name="Takahashi M."/>
            <person name="Kanda K."/>
            <person name="Yokoi T."/>
            <person name="Furuya T."/>
            <person name="Kikkawa E."/>
            <person name="Omura Y."/>
            <person name="Abe K."/>
            <person name="Kamihara K."/>
            <person name="Katsuta N."/>
            <person name="Sato K."/>
            <person name="Tanikawa M."/>
            <person name="Yamazaki M."/>
            <person name="Ninomiya K."/>
            <person name="Ishibashi T."/>
            <person name="Yamashita H."/>
            <person name="Murakawa K."/>
            <person name="Fujimori K."/>
            <person name="Tanai H."/>
            <person name="Kimata M."/>
            <person name="Watanabe M."/>
            <person name="Hiraoka S."/>
            <person name="Chiba Y."/>
            <person name="Ishida S."/>
            <person name="Ono Y."/>
            <person name="Takiguchi S."/>
            <person name="Watanabe S."/>
            <person name="Yosida M."/>
            <person name="Hotuta T."/>
            <person name="Kusano J."/>
            <person name="Kanehori K."/>
            <person name="Takahashi-Fujii A."/>
            <person name="Hara H."/>
            <person name="Tanase T.-O."/>
            <person name="Nomura Y."/>
            <person name="Togiya S."/>
            <person name="Komai F."/>
            <person name="Hara R."/>
            <person name="Takeuchi K."/>
            <person name="Arita M."/>
            <person name="Imose N."/>
            <person name="Musashino K."/>
            <person name="Yuuki H."/>
            <person name="Oshima A."/>
            <person name="Sasaki N."/>
            <person name="Aotsuka S."/>
            <person name="Yoshikawa Y."/>
            <person name="Matsunawa H."/>
            <person name="Ichihara T."/>
            <person name="Shiohata N."/>
            <person name="Sano S."/>
            <person name="Moriya S."/>
            <person name="Momiyama H."/>
            <person name="Satoh N."/>
            <person name="Takami S."/>
            <person name="Terashima Y."/>
            <person name="Suzuki O."/>
            <person name="Nakagawa S."/>
            <person name="Senoh A."/>
            <person name="Mizoguchi H."/>
            <person name="Goto Y."/>
            <person name="Shimizu F."/>
            <person name="Wakebe H."/>
            <person name="Hishigaki H."/>
            <person name="Watanabe T."/>
            <person name="Sugiyama A."/>
            <person name="Takemoto M."/>
            <person name="Kawakami B."/>
            <person name="Yamazaki M."/>
            <person name="Watanabe K."/>
            <person name="Kumagai A."/>
            <person name="Itakura S."/>
            <person name="Fukuzumi Y."/>
            <person name="Fujimori Y."/>
            <person name="Komiyama M."/>
            <person name="Tashiro H."/>
            <person name="Tanigami A."/>
            <person name="Fujiwara T."/>
            <person name="Ono T."/>
            <person name="Yamada K."/>
            <person name="Fujii Y."/>
            <person name="Ozaki K."/>
            <person name="Hirao M."/>
            <person name="Ohmori Y."/>
            <person name="Kawabata A."/>
            <person name="Hikiji T."/>
            <person name="Kobatake N."/>
            <person name="Inagaki H."/>
            <person name="Ikema Y."/>
            <person name="Okamoto S."/>
            <person name="Okitani R."/>
            <person name="Kawakami T."/>
            <person name="Noguchi S."/>
            <person name="Itoh T."/>
            <person name="Shigeta K."/>
            <person name="Senba T."/>
            <person name="Matsumura K."/>
            <person name="Nakajima Y."/>
            <person name="Mizuno T."/>
            <person name="Morinaga M."/>
            <person name="Sasaki M."/>
            <person name="Togashi T."/>
            <person name="Oyama M."/>
            <person name="Hata H."/>
            <person name="Watanabe M."/>
            <person name="Komatsu T."/>
            <person name="Mizushima-Sugano J."/>
            <person name="Satoh T."/>
            <person name="Shirai Y."/>
            <person name="Takahashi Y."/>
            <person name="Nakagawa K."/>
            <person name="Okumura K."/>
            <person name="Nagase T."/>
            <person name="Nomura N."/>
            <person name="Kikuchi H."/>
            <person name="Masuho Y."/>
            <person name="Yamashita R."/>
            <person name="Nakai K."/>
            <person name="Yada T."/>
            <person name="Nakamura Y."/>
            <person name="Ohara O."/>
            <person name="Isogai T."/>
            <person name="Sugano S."/>
        </authorList>
    </citation>
    <scope>NUCLEOTIDE SEQUENCE [LARGE SCALE MRNA] (ISOFORM 3)</scope>
</reference>
<reference key="7">
    <citation type="journal article" date="2003" name="Nature">
        <title>The DNA sequence and analysis of human chromosome 14.</title>
        <authorList>
            <person name="Heilig R."/>
            <person name="Eckenberg R."/>
            <person name="Petit J.-L."/>
            <person name="Fonknechten N."/>
            <person name="Da Silva C."/>
            <person name="Cattolico L."/>
            <person name="Levy M."/>
            <person name="Barbe V."/>
            <person name="De Berardinis V."/>
            <person name="Ureta-Vidal A."/>
            <person name="Pelletier E."/>
            <person name="Vico V."/>
            <person name="Anthouard V."/>
            <person name="Rowen L."/>
            <person name="Madan A."/>
            <person name="Qin S."/>
            <person name="Sun H."/>
            <person name="Du H."/>
            <person name="Pepin K."/>
            <person name="Artiguenave F."/>
            <person name="Robert C."/>
            <person name="Cruaud C."/>
            <person name="Bruels T."/>
            <person name="Jaillon O."/>
            <person name="Friedlander L."/>
            <person name="Samson G."/>
            <person name="Brottier P."/>
            <person name="Cure S."/>
            <person name="Segurens B."/>
            <person name="Aniere F."/>
            <person name="Samain S."/>
            <person name="Crespeau H."/>
            <person name="Abbasi N."/>
            <person name="Aiach N."/>
            <person name="Boscus D."/>
            <person name="Dickhoff R."/>
            <person name="Dors M."/>
            <person name="Dubois I."/>
            <person name="Friedman C."/>
            <person name="Gouyvenoux M."/>
            <person name="James R."/>
            <person name="Madan A."/>
            <person name="Mairey-Estrada B."/>
            <person name="Mangenot S."/>
            <person name="Martins N."/>
            <person name="Menard M."/>
            <person name="Oztas S."/>
            <person name="Ratcliffe A."/>
            <person name="Shaffer T."/>
            <person name="Trask B."/>
            <person name="Vacherie B."/>
            <person name="Bellemere C."/>
            <person name="Belser C."/>
            <person name="Besnard-Gonnet M."/>
            <person name="Bartol-Mavel D."/>
            <person name="Boutard M."/>
            <person name="Briez-Silla S."/>
            <person name="Combette S."/>
            <person name="Dufosse-Laurent V."/>
            <person name="Ferron C."/>
            <person name="Lechaplais C."/>
            <person name="Louesse C."/>
            <person name="Muselet D."/>
            <person name="Magdelenat G."/>
            <person name="Pateau E."/>
            <person name="Petit E."/>
            <person name="Sirvain-Trukniewicz P."/>
            <person name="Trybou A."/>
            <person name="Vega-Czarny N."/>
            <person name="Bataille E."/>
            <person name="Bluet E."/>
            <person name="Bordelais I."/>
            <person name="Dubois M."/>
            <person name="Dumont C."/>
            <person name="Guerin T."/>
            <person name="Haffray S."/>
            <person name="Hammadi R."/>
            <person name="Muanga J."/>
            <person name="Pellouin V."/>
            <person name="Robert D."/>
            <person name="Wunderle E."/>
            <person name="Gauguet G."/>
            <person name="Roy A."/>
            <person name="Sainte-Marthe L."/>
            <person name="Verdier J."/>
            <person name="Verdier-Discala C."/>
            <person name="Hillier L.W."/>
            <person name="Fulton L."/>
            <person name="McPherson J."/>
            <person name="Matsuda F."/>
            <person name="Wilson R."/>
            <person name="Scarpelli C."/>
            <person name="Gyapay G."/>
            <person name="Wincker P."/>
            <person name="Saurin W."/>
            <person name="Quetier F."/>
            <person name="Waterston R."/>
            <person name="Hood L."/>
            <person name="Weissenbach J."/>
        </authorList>
    </citation>
    <scope>NUCLEOTIDE SEQUENCE [LARGE SCALE GENOMIC DNA]</scope>
</reference>
<reference key="8">
    <citation type="submission" date="2005-07" db="EMBL/GenBank/DDBJ databases">
        <authorList>
            <person name="Mural R.J."/>
            <person name="Istrail S."/>
            <person name="Sutton G."/>
            <person name="Florea L."/>
            <person name="Halpern A.L."/>
            <person name="Mobarry C.M."/>
            <person name="Lippert R."/>
            <person name="Walenz B."/>
            <person name="Shatkay H."/>
            <person name="Dew I."/>
            <person name="Miller J.R."/>
            <person name="Flanigan M.J."/>
            <person name="Edwards N.J."/>
            <person name="Bolanos R."/>
            <person name="Fasulo D."/>
            <person name="Halldorsson B.V."/>
            <person name="Hannenhalli S."/>
            <person name="Turner R."/>
            <person name="Yooseph S."/>
            <person name="Lu F."/>
            <person name="Nusskern D.R."/>
            <person name="Shue B.C."/>
            <person name="Zheng X.H."/>
            <person name="Zhong F."/>
            <person name="Delcher A.L."/>
            <person name="Huson D.H."/>
            <person name="Kravitz S.A."/>
            <person name="Mouchard L."/>
            <person name="Reinert K."/>
            <person name="Remington K.A."/>
            <person name="Clark A.G."/>
            <person name="Waterman M.S."/>
            <person name="Eichler E.E."/>
            <person name="Adams M.D."/>
            <person name="Hunkapiller M.W."/>
            <person name="Myers E.W."/>
            <person name="Venter J.C."/>
        </authorList>
    </citation>
    <scope>NUCLEOTIDE SEQUENCE [LARGE SCALE GENOMIC DNA]</scope>
</reference>
<reference key="9">
    <citation type="journal article" date="2004" name="Genome Res.">
        <title>The status, quality, and expansion of the NIH full-length cDNA project: the Mammalian Gene Collection (MGC).</title>
        <authorList>
            <consortium name="The MGC Project Team"/>
        </authorList>
    </citation>
    <scope>NUCLEOTIDE SEQUENCE [LARGE SCALE MRNA] (ISOFORM 1)</scope>
    <source>
        <tissue>Eye</tissue>
        <tissue>Lung</tissue>
    </source>
</reference>
<reference key="10">
    <citation type="journal article" date="2004" name="J. Biol. Chem.">
        <title>Human homolog of disc-large is required for adherens junction assembly and differentiation of human intestinal epithelial cells.</title>
        <authorList>
            <person name="Laprise P."/>
            <person name="Viel A."/>
            <person name="Rivard N."/>
        </authorList>
    </citation>
    <scope>FUNCTION</scope>
    <scope>INTERACTION WITH CDH1</scope>
    <scope>SUBCELLULAR LOCATION</scope>
    <scope>PHOSPHORYLATION</scope>
</reference>
<reference key="11">
    <citation type="journal article" date="2004" name="J. Biol. Chem.">
        <title>Fbx7 functions in the SCF complex regulating Cdk1-cyclin B-phosphorylated hepatoma up-regulated protein (HURP) proteolysis by a proline-rich region.</title>
        <authorList>
            <person name="Hsu J.-M."/>
            <person name="Lee Y.-C.G."/>
            <person name="Yu C.-T.R."/>
            <person name="Huang C.-Y.F."/>
        </authorList>
    </citation>
    <scope>FUNCTION</scope>
    <scope>INTERACTION WITH CDK1; FBXO7 AND SCF COMPLEX</scope>
    <scope>UBIQUITINATION</scope>
    <scope>PHOSPHORYLATION AT SER-67; THR-329; THR-401; THR-402; SER-618; THR-639; SER-642; THR-759 AND SER-839</scope>
</reference>
<reference key="12">
    <citation type="journal article" date="2005" name="Mol. Cell. Biol.">
        <title>Phosphorylation and stabilization of HURP by Aurora-A: implication of HURP as a transforming target of Aurora-A.</title>
        <authorList>
            <person name="Yu C.T."/>
            <person name="Hsu J.M."/>
            <person name="Lee Y.C."/>
            <person name="Tsou A.P."/>
            <person name="Chou C.K."/>
            <person name="Huang C.Y."/>
        </authorList>
    </citation>
    <scope>PHOSPHORYLATION AT SER-627; SER-725; SER-757 AND SER-830</scope>
</reference>
<reference key="13">
    <citation type="journal article" date="2005" name="Mol. Cell. Proteomics">
        <title>Proteome analysis of the human mitotic spindle.</title>
        <authorList>
            <person name="Sauer G."/>
            <person name="Koerner R."/>
            <person name="Hanisch A."/>
            <person name="Ries A."/>
            <person name="Nigg E.A."/>
            <person name="Sillje H.H.W."/>
        </authorList>
    </citation>
    <scope>SUBCELLULAR LOCATION</scope>
    <scope>IDENTIFICATION BY MASS SPECTROMETRY</scope>
</reference>
<reference key="14">
    <citation type="journal article" date="2006" name="Nat. Biotechnol.">
        <title>A probability-based approach for high-throughput protein phosphorylation analysis and site localization.</title>
        <authorList>
            <person name="Beausoleil S.A."/>
            <person name="Villen J."/>
            <person name="Gerber S.A."/>
            <person name="Rush J."/>
            <person name="Gygi S.P."/>
        </authorList>
    </citation>
    <scope>PHOSPHORYLATION [LARGE SCALE ANALYSIS] AT SER-777</scope>
    <scope>IDENTIFICATION BY MASS SPECTROMETRY [LARGE SCALE ANALYSIS]</scope>
    <source>
        <tissue>Cervix carcinoma</tissue>
    </source>
</reference>
<reference key="15">
    <citation type="journal article" date="2008" name="J. Proteome Res.">
        <title>Combining protein-based IMAC, peptide-based IMAC, and MudPIT for efficient phosphoproteomic analysis.</title>
        <authorList>
            <person name="Cantin G.T."/>
            <person name="Yi W."/>
            <person name="Lu B."/>
            <person name="Park S.K."/>
            <person name="Xu T."/>
            <person name="Lee J.-D."/>
            <person name="Yates J.R. III"/>
        </authorList>
    </citation>
    <scope>PHOSPHORYLATION [LARGE SCALE ANALYSIS] AT SER-806 AND SER-812</scope>
    <scope>IDENTIFICATION BY MASS SPECTROMETRY [LARGE SCALE ANALYSIS]</scope>
    <source>
        <tissue>Cervix carcinoma</tissue>
    </source>
</reference>
<reference key="16">
    <citation type="journal article" date="2008" name="Proc. Natl. Acad. Sci. U.S.A.">
        <title>A quantitative atlas of mitotic phosphorylation.</title>
        <authorList>
            <person name="Dephoure N."/>
            <person name="Zhou C."/>
            <person name="Villen J."/>
            <person name="Beausoleil S.A."/>
            <person name="Bakalarski C.E."/>
            <person name="Elledge S.J."/>
            <person name="Gygi S.P."/>
        </authorList>
    </citation>
    <scope>PHOSPHORYLATION [LARGE SCALE ANALYSIS] AT THR-326; THR-329; THR-338; SER-618; SER-662; SER-725; THR-784; SER-806 AND SER-812</scope>
    <scope>IDENTIFICATION BY MASS SPECTROMETRY [LARGE SCALE ANALYSIS]</scope>
    <source>
        <tissue>Cervix carcinoma</tissue>
    </source>
</reference>
<reference key="17">
    <citation type="journal article" date="2010" name="Sci. Signal.">
        <title>Quantitative phosphoproteomics reveals widespread full phosphorylation site occupancy during mitosis.</title>
        <authorList>
            <person name="Olsen J.V."/>
            <person name="Vermeulen M."/>
            <person name="Santamaria A."/>
            <person name="Kumar C."/>
            <person name="Miller M.L."/>
            <person name="Jensen L.J."/>
            <person name="Gnad F."/>
            <person name="Cox J."/>
            <person name="Jensen T.S."/>
            <person name="Nigg E.A."/>
            <person name="Brunak S."/>
            <person name="Mann M."/>
        </authorList>
    </citation>
    <scope>PHOSPHORYLATION [LARGE SCALE ANALYSIS] AT SER-662; SER-725; SER-777; SER-830 AND SER-839</scope>
    <scope>IDENTIFICATION BY MASS SPECTROMETRY [LARGE SCALE ANALYSIS]</scope>
    <source>
        <tissue>Cervix carcinoma</tissue>
    </source>
</reference>
<reference key="18">
    <citation type="journal article" date="2011" name="BMC Syst. Biol.">
        <title>Initial characterization of the human central proteome.</title>
        <authorList>
            <person name="Burkard T.R."/>
            <person name="Planyavsky M."/>
            <person name="Kaupe I."/>
            <person name="Breitwieser F.P."/>
            <person name="Buerckstuemmer T."/>
            <person name="Bennett K.L."/>
            <person name="Superti-Furga G."/>
            <person name="Colinge J."/>
        </authorList>
    </citation>
    <scope>IDENTIFICATION BY MASS SPECTROMETRY [LARGE SCALE ANALYSIS]</scope>
</reference>
<reference key="19">
    <citation type="journal article" date="2011" name="Sci. Signal.">
        <title>System-wide temporal characterization of the proteome and phosphoproteome of human embryonic stem cell differentiation.</title>
        <authorList>
            <person name="Rigbolt K.T."/>
            <person name="Prokhorova T.A."/>
            <person name="Akimov V."/>
            <person name="Henningsen J."/>
            <person name="Johansen P.T."/>
            <person name="Kratchmarova I."/>
            <person name="Kassem M."/>
            <person name="Mann M."/>
            <person name="Olsen J.V."/>
            <person name="Blagoev B."/>
        </authorList>
    </citation>
    <scope>PHOSPHORYLATION [LARGE SCALE ANALYSIS] AT SER-662 AND SER-777</scope>
    <scope>IDENTIFICATION BY MASS SPECTROMETRY [LARGE SCALE ANALYSIS]</scope>
</reference>
<reference key="20">
    <citation type="journal article" date="2013" name="J. Proteome Res.">
        <title>Toward a comprehensive characterization of a human cancer cell phosphoproteome.</title>
        <authorList>
            <person name="Zhou H."/>
            <person name="Di Palma S."/>
            <person name="Preisinger C."/>
            <person name="Peng M."/>
            <person name="Polat A.N."/>
            <person name="Heck A.J."/>
            <person name="Mohammed S."/>
        </authorList>
    </citation>
    <scope>PHOSPHORYLATION [LARGE SCALE ANALYSIS] AT SER-67; SER-202; SER-618; SER-627; SER-629; SER-634; SER-662; SER-725; SER-774; SER-777 AND SER-806</scope>
    <scope>IDENTIFICATION BY MASS SPECTROMETRY [LARGE SCALE ANALYSIS]</scope>
    <source>
        <tissue>Cervix carcinoma</tissue>
        <tissue>Erythroleukemia</tissue>
    </source>
</reference>
<reference key="21">
    <citation type="journal article" date="2017" name="Nat. Struct. Mol. Biol.">
        <title>Site-specific mapping of the human SUMO proteome reveals co-modification with phosphorylation.</title>
        <authorList>
            <person name="Hendriks I.A."/>
            <person name="Lyon D."/>
            <person name="Young C."/>
            <person name="Jensen L.J."/>
            <person name="Vertegaal A.C."/>
            <person name="Nielsen M.L."/>
        </authorList>
    </citation>
    <scope>SUMOYLATION [LARGE SCALE ANALYSIS] AT LYS-347</scope>
    <scope>IDENTIFICATION BY MASS SPECTROMETRY [LARGE SCALE ANALYSIS]</scope>
</reference>
<accession>Q15398</accession>
<accession>A8MTM6</accession>
<accession>B4DRM8</accession>
<accession>Q86T11</accession>
<accession>Q8NG58</accession>
<protein>
    <recommendedName>
        <fullName>Disks large-associated protein 5</fullName>
        <shortName>DAP-5</shortName>
    </recommendedName>
    <alternativeName>
        <fullName>Discs large homolog 7</fullName>
    </alternativeName>
    <alternativeName>
        <fullName>Disks large-associated protein DLG7</fullName>
    </alternativeName>
    <alternativeName>
        <fullName>Hepatoma up-regulated protein</fullName>
        <shortName>HURP</shortName>
    </alternativeName>
</protein>
<organism>
    <name type="scientific">Homo sapiens</name>
    <name type="common">Human</name>
    <dbReference type="NCBI Taxonomy" id="9606"/>
    <lineage>
        <taxon>Eukaryota</taxon>
        <taxon>Metazoa</taxon>
        <taxon>Chordata</taxon>
        <taxon>Craniata</taxon>
        <taxon>Vertebrata</taxon>
        <taxon>Euteleostomi</taxon>
        <taxon>Mammalia</taxon>
        <taxon>Eutheria</taxon>
        <taxon>Euarchontoglires</taxon>
        <taxon>Primates</taxon>
        <taxon>Haplorrhini</taxon>
        <taxon>Catarrhini</taxon>
        <taxon>Hominidae</taxon>
        <taxon>Homo</taxon>
    </lineage>
</organism>
<dbReference type="EMBL" id="AB076695">
    <property type="protein sequence ID" value="BAB97376.1"/>
    <property type="molecule type" value="mRNA"/>
</dbReference>
<dbReference type="EMBL" id="D13633">
    <property type="protein sequence ID" value="BAA02797.3"/>
    <property type="status" value="ALT_INIT"/>
    <property type="molecule type" value="mRNA"/>
</dbReference>
<dbReference type="EMBL" id="BX248255">
    <property type="protein sequence ID" value="CAD62583.1"/>
    <property type="status" value="ALT_INIT"/>
    <property type="molecule type" value="mRNA"/>
</dbReference>
<dbReference type="EMBL" id="BT007344">
    <property type="protein sequence ID" value="AAP36008.1"/>
    <property type="molecule type" value="mRNA"/>
</dbReference>
<dbReference type="EMBL" id="AK299338">
    <property type="protein sequence ID" value="BAG61340.1"/>
    <property type="molecule type" value="mRNA"/>
</dbReference>
<dbReference type="EMBL" id="AL139316">
    <property type="status" value="NOT_ANNOTATED_CDS"/>
    <property type="molecule type" value="Genomic_DNA"/>
</dbReference>
<dbReference type="EMBL" id="CH471061">
    <property type="protein sequence ID" value="EAW80664.1"/>
    <property type="molecule type" value="Genomic_DNA"/>
</dbReference>
<dbReference type="EMBL" id="BC010658">
    <property type="protein sequence ID" value="AAH10658.2"/>
    <property type="molecule type" value="mRNA"/>
</dbReference>
<dbReference type="EMBL" id="BC016276">
    <property type="protein sequence ID" value="AAH16276.2"/>
    <property type="molecule type" value="mRNA"/>
</dbReference>
<dbReference type="CCDS" id="CCDS53897.1">
    <molecule id="Q15398-3"/>
</dbReference>
<dbReference type="CCDS" id="CCDS9723.1">
    <molecule id="Q15398-2"/>
</dbReference>
<dbReference type="RefSeq" id="NP_001139487.1">
    <molecule id="Q15398-3"/>
    <property type="nucleotide sequence ID" value="NM_001146015.2"/>
</dbReference>
<dbReference type="RefSeq" id="NP_055565.3">
    <molecule id="Q15398-2"/>
    <property type="nucleotide sequence ID" value="NM_014750.4"/>
</dbReference>
<dbReference type="RefSeq" id="XP_016877329.1">
    <molecule id="Q15398-2"/>
    <property type="nucleotide sequence ID" value="XM_017021840.3"/>
</dbReference>
<dbReference type="RefSeq" id="XP_047287972.1">
    <molecule id="Q15398-3"/>
    <property type="nucleotide sequence ID" value="XM_047432016.1"/>
</dbReference>
<dbReference type="RefSeq" id="XP_054233112.1">
    <molecule id="Q15398-2"/>
    <property type="nucleotide sequence ID" value="XM_054377137.1"/>
</dbReference>
<dbReference type="RefSeq" id="XP_054233113.1">
    <molecule id="Q15398-3"/>
    <property type="nucleotide sequence ID" value="XM_054377138.1"/>
</dbReference>
<dbReference type="PDB" id="7ZX4">
    <property type="method" value="X-ray"/>
    <property type="resolution" value="2.08 A"/>
    <property type="chains" value="C/D/E=826-846"/>
</dbReference>
<dbReference type="PDB" id="8X9P">
    <property type="method" value="EM"/>
    <property type="resolution" value="3.54 A"/>
    <property type="chains" value="C=199-619"/>
</dbReference>
<dbReference type="PDB" id="9DUQ">
    <property type="method" value="EM"/>
    <property type="resolution" value="2.80 A"/>
    <property type="chains" value="r/s/t/u/v/w/x/y/z=87-132"/>
</dbReference>
<dbReference type="PDBsum" id="7ZX4"/>
<dbReference type="PDBsum" id="8X9P"/>
<dbReference type="PDBsum" id="9DUQ"/>
<dbReference type="EMDB" id="EMD-47173"/>
<dbReference type="SMR" id="Q15398"/>
<dbReference type="BioGRID" id="115131">
    <property type="interactions" value="66"/>
</dbReference>
<dbReference type="ELM" id="Q15398"/>
<dbReference type="FunCoup" id="Q15398">
    <property type="interactions" value="1143"/>
</dbReference>
<dbReference type="IntAct" id="Q15398">
    <property type="interactions" value="36"/>
</dbReference>
<dbReference type="MINT" id="Q15398"/>
<dbReference type="STRING" id="9606.ENSP00000247191"/>
<dbReference type="GlyGen" id="Q15398">
    <property type="glycosylation" value="2 sites, 1 O-linked glycan (2 sites)"/>
</dbReference>
<dbReference type="iPTMnet" id="Q15398"/>
<dbReference type="MetOSite" id="Q15398"/>
<dbReference type="PhosphoSitePlus" id="Q15398"/>
<dbReference type="BioMuta" id="DLGAP5"/>
<dbReference type="DMDM" id="82592583"/>
<dbReference type="CPTAC" id="CPTAC-1204"/>
<dbReference type="CPTAC" id="CPTAC-1205"/>
<dbReference type="jPOST" id="Q15398"/>
<dbReference type="MassIVE" id="Q15398"/>
<dbReference type="PaxDb" id="9606-ENSP00000247191"/>
<dbReference type="PeptideAtlas" id="Q15398"/>
<dbReference type="ProteomicsDB" id="2036"/>
<dbReference type="ProteomicsDB" id="60567">
    <molecule id="Q15398-2"/>
</dbReference>
<dbReference type="ProteomicsDB" id="60568">
    <molecule id="Q15398-1"/>
</dbReference>
<dbReference type="Pumba" id="Q15398"/>
<dbReference type="ABCD" id="Q15398">
    <property type="antibodies" value="3 sequenced antibodies"/>
</dbReference>
<dbReference type="Antibodypedia" id="5">
    <property type="antibodies" value="260 antibodies from 32 providers"/>
</dbReference>
<dbReference type="DNASU" id="9787"/>
<dbReference type="Ensembl" id="ENST00000247191.7">
    <molecule id="Q15398-2"/>
    <property type="protein sequence ID" value="ENSP00000247191.2"/>
    <property type="gene ID" value="ENSG00000126787.13"/>
</dbReference>
<dbReference type="Ensembl" id="ENST00000395425.6">
    <molecule id="Q15398-3"/>
    <property type="protein sequence ID" value="ENSP00000378815.2"/>
    <property type="gene ID" value="ENSG00000126787.13"/>
</dbReference>
<dbReference type="GeneID" id="9787"/>
<dbReference type="KEGG" id="hsa:9787"/>
<dbReference type="MANE-Select" id="ENST00000247191.7">
    <property type="protein sequence ID" value="ENSP00000247191.2"/>
    <property type="RefSeq nucleotide sequence ID" value="NM_014750.5"/>
    <property type="RefSeq protein sequence ID" value="NP_055565.3"/>
</dbReference>
<dbReference type="UCSC" id="uc001xbs.4">
    <molecule id="Q15398-2"/>
    <property type="organism name" value="human"/>
</dbReference>
<dbReference type="AGR" id="HGNC:16864"/>
<dbReference type="CTD" id="9787"/>
<dbReference type="DisGeNET" id="9787"/>
<dbReference type="GeneCards" id="DLGAP5"/>
<dbReference type="HGNC" id="HGNC:16864">
    <property type="gene designation" value="DLGAP5"/>
</dbReference>
<dbReference type="HPA" id="ENSG00000126787">
    <property type="expression patterns" value="Group enriched (bone marrow, lymphoid tissue, testis)"/>
</dbReference>
<dbReference type="MIM" id="617859">
    <property type="type" value="gene"/>
</dbReference>
<dbReference type="neXtProt" id="NX_Q15398"/>
<dbReference type="OpenTargets" id="ENSG00000126787"/>
<dbReference type="PharmGKB" id="PA162383761"/>
<dbReference type="VEuPathDB" id="HostDB:ENSG00000126787"/>
<dbReference type="eggNOG" id="KOG3971">
    <property type="taxonomic scope" value="Eukaryota"/>
</dbReference>
<dbReference type="GeneTree" id="ENSGT00940000158652"/>
<dbReference type="HOGENOM" id="CLU_018126_0_0_1"/>
<dbReference type="InParanoid" id="Q15398"/>
<dbReference type="OMA" id="PFDMPML"/>
<dbReference type="OrthoDB" id="10023951at2759"/>
<dbReference type="PAN-GO" id="Q15398">
    <property type="GO annotations" value="9 GO annotations based on evolutionary models"/>
</dbReference>
<dbReference type="PhylomeDB" id="Q15398"/>
<dbReference type="TreeFam" id="TF321382"/>
<dbReference type="PathwayCommons" id="Q15398"/>
<dbReference type="Reactome" id="R-HSA-9013508">
    <property type="pathway name" value="NOTCH3 Intracellular Domain Regulates Transcription"/>
</dbReference>
<dbReference type="SignaLink" id="Q15398"/>
<dbReference type="SIGNOR" id="Q15398"/>
<dbReference type="BioGRID-ORCS" id="9787">
    <property type="hits" value="68 hits in 1172 CRISPR screens"/>
</dbReference>
<dbReference type="ChiTaRS" id="DLGAP5">
    <property type="organism name" value="human"/>
</dbReference>
<dbReference type="GeneWiki" id="DLGAP5"/>
<dbReference type="GenomeRNAi" id="9787"/>
<dbReference type="Pharos" id="Q15398">
    <property type="development level" value="Tbio"/>
</dbReference>
<dbReference type="PRO" id="PR:Q15398"/>
<dbReference type="Proteomes" id="UP000005640">
    <property type="component" value="Chromosome 14"/>
</dbReference>
<dbReference type="RNAct" id="Q15398">
    <property type="molecule type" value="protein"/>
</dbReference>
<dbReference type="Bgee" id="ENSG00000126787">
    <property type="expression patterns" value="Expressed in secondary oocyte and 126 other cell types or tissues"/>
</dbReference>
<dbReference type="ExpressionAtlas" id="Q15398">
    <property type="expression patterns" value="baseline and differential"/>
</dbReference>
<dbReference type="GO" id="GO:0005737">
    <property type="term" value="C:cytoplasm"/>
    <property type="evidence" value="ECO:0000318"/>
    <property type="project" value="GO_Central"/>
</dbReference>
<dbReference type="GO" id="GO:0005829">
    <property type="term" value="C:cytosol"/>
    <property type="evidence" value="ECO:0000314"/>
    <property type="project" value="HPA"/>
</dbReference>
<dbReference type="GO" id="GO:0072686">
    <property type="term" value="C:mitotic spindle"/>
    <property type="evidence" value="ECO:0000314"/>
    <property type="project" value="HPA"/>
</dbReference>
<dbReference type="GO" id="GO:0005634">
    <property type="term" value="C:nucleus"/>
    <property type="evidence" value="ECO:0000314"/>
    <property type="project" value="UniProtKB"/>
</dbReference>
<dbReference type="GO" id="GO:0031616">
    <property type="term" value="C:spindle pole centrosome"/>
    <property type="evidence" value="ECO:0000314"/>
    <property type="project" value="UniProtKB"/>
</dbReference>
<dbReference type="GO" id="GO:0008017">
    <property type="term" value="F:microtubule binding"/>
    <property type="evidence" value="ECO:0000318"/>
    <property type="project" value="GO_Central"/>
</dbReference>
<dbReference type="GO" id="GO:0051642">
    <property type="term" value="P:centrosome localization"/>
    <property type="evidence" value="ECO:0000318"/>
    <property type="project" value="GO_Central"/>
</dbReference>
<dbReference type="GO" id="GO:0007059">
    <property type="term" value="P:chromosome segregation"/>
    <property type="evidence" value="ECO:0000318"/>
    <property type="project" value="GO_Central"/>
</dbReference>
<dbReference type="GO" id="GO:0051382">
    <property type="term" value="P:kinetochore assembly"/>
    <property type="evidence" value="ECO:0000318"/>
    <property type="project" value="GO_Central"/>
</dbReference>
<dbReference type="GO" id="GO:0007079">
    <property type="term" value="P:mitotic chromosome movement towards spindle pole"/>
    <property type="evidence" value="ECO:0000303"/>
    <property type="project" value="UniProtKB"/>
</dbReference>
<dbReference type="GO" id="GO:0007052">
    <property type="term" value="P:mitotic spindle organization"/>
    <property type="evidence" value="ECO:0000318"/>
    <property type="project" value="GO_Central"/>
</dbReference>
<dbReference type="GO" id="GO:0045842">
    <property type="term" value="P:positive regulation of mitotic metaphase/anaphase transition"/>
    <property type="evidence" value="ECO:0000303"/>
    <property type="project" value="UniProtKB"/>
</dbReference>
<dbReference type="GO" id="GO:0007346">
    <property type="term" value="P:regulation of mitotic cell cycle"/>
    <property type="evidence" value="ECO:0000318"/>
    <property type="project" value="GO_Central"/>
</dbReference>
<dbReference type="GO" id="GO:0023052">
    <property type="term" value="P:signaling"/>
    <property type="evidence" value="ECO:0007669"/>
    <property type="project" value="InterPro"/>
</dbReference>
<dbReference type="InterPro" id="IPR005026">
    <property type="entry name" value="SAPAP"/>
</dbReference>
<dbReference type="PANTHER" id="PTHR12353:SF1">
    <property type="entry name" value="DISKS LARGE-ASSOCIATED PROTEIN 5"/>
    <property type="match status" value="1"/>
</dbReference>
<dbReference type="PANTHER" id="PTHR12353">
    <property type="entry name" value="DISKS LARGE-ASSOCIATED PROTEIN DAP SAP90/PSD-95-ASSOCIATED PROTEIN"/>
    <property type="match status" value="1"/>
</dbReference>
<dbReference type="Pfam" id="PF03359">
    <property type="entry name" value="GKAP"/>
    <property type="match status" value="1"/>
</dbReference>
<sequence length="846" mass="95115">MSSSHFASRHRKDISTEMIRTKIAHRKSLSQKENRHKEYERNRHFGLKDVNIPTLEGRILVELDETSQGLVPEKTNVKPRAMKTILGDQRKQMLQKYKEEKQLQKLKEQREKAKRGIFKVGRYRPDMPCFLLSNQNAVKAEPKKAIPSSVRITRSKAKDQMEQTKIDNESDVRAIRPGPRQTSEKKVSDKEKKVVQPVMPTSLRMTRSATQAAKQVPRTVSSTTARKPVTRAANENEPEGKVPSKGRPAKNVETKPDKGISCKVDSEENTLNSQTNATSGMNPDGVLSKMENLPEINTAKIKGKNSFAPKDFMFQPLDGLKTYQVTPMTPRSANAFLTPSYTWTPLKTEVDESQATKEILAQKCKTYSTKTIQQDSNKLPCPLGPLTVWHEEHVLNKNEATTKNLNGLPIKEVPSLERNEGRIAQPHHGVPYFRNILQSETEKLTSHCFEWDRKLELDIPDDAKDLIRTAVGQTRLLMKERFKQFEGLVDDCEYKRGIKETTCTDLDGFWDMVSFQIEDVIHKFNNLIKLEESGWQVNNNMNHNMNKNVFRKKVVSGIASKPKQDDAGRIAARNRLAAIKNAMRERIRQEECAETAVSVIPKEVDKIVFDAGFFRVESPVKLFSGLSVSSEGPSQRLGTPKSVNKAVSQSRNEMGIPQQTTSPENAGPQNTKSEHVKKTLFLSIPESRSSIEDAQCPGLPDLIEENHVVNKTDLKVDCLSSERMSLPLLAGGVADDINTNKKEGISDVVEGMELNSSITSQDVLMSSPEKNTASQNSILEEGETKISQSELFDNKSLTTECHLLDSPGLNCSNPFTQLERRHQEHARHISFGGNLITFSPLQPGEF</sequence>
<gene>
    <name type="primary">DLGAP5</name>
    <name type="synonym">DLG7</name>
    <name type="synonym">KIAA0008</name>
</gene>
<feature type="chain" id="PRO_0000174299" description="Disks large-associated protein 5">
    <location>
        <begin position="1"/>
        <end position="846"/>
    </location>
</feature>
<feature type="region of interest" description="Disordered" evidence="2">
    <location>
        <begin position="153"/>
        <end position="284"/>
    </location>
</feature>
<feature type="region of interest" description="Disordered" evidence="2">
    <location>
        <begin position="628"/>
        <end position="674"/>
    </location>
</feature>
<feature type="coiled-coil region" evidence="1">
    <location>
        <begin position="90"/>
        <end position="120"/>
    </location>
</feature>
<feature type="compositionally biased region" description="Basic and acidic residues" evidence="2">
    <location>
        <begin position="156"/>
        <end position="174"/>
    </location>
</feature>
<feature type="compositionally biased region" description="Basic and acidic residues" evidence="2">
    <location>
        <begin position="182"/>
        <end position="194"/>
    </location>
</feature>
<feature type="compositionally biased region" description="Polar residues" evidence="2">
    <location>
        <begin position="203"/>
        <end position="225"/>
    </location>
</feature>
<feature type="compositionally biased region" description="Basic and acidic residues" evidence="2">
    <location>
        <begin position="250"/>
        <end position="266"/>
    </location>
</feature>
<feature type="compositionally biased region" description="Polar residues" evidence="2">
    <location>
        <begin position="269"/>
        <end position="281"/>
    </location>
</feature>
<feature type="compositionally biased region" description="Polar residues" evidence="2">
    <location>
        <begin position="628"/>
        <end position="671"/>
    </location>
</feature>
<feature type="modified residue" description="Phosphoserine; by CDK1" evidence="5 17">
    <location>
        <position position="67"/>
    </location>
</feature>
<feature type="modified residue" description="Phosphoserine" evidence="17">
    <location>
        <position position="202"/>
    </location>
</feature>
<feature type="modified residue" description="Phosphothreonine" evidence="14">
    <location>
        <position position="326"/>
    </location>
</feature>
<feature type="modified residue" description="Phosphothreonine; by CDK1" evidence="5 14">
    <location>
        <position position="329"/>
    </location>
</feature>
<feature type="modified residue" description="Phosphothreonine" evidence="14">
    <location>
        <position position="338"/>
    </location>
</feature>
<feature type="modified residue" description="Phosphothreonine; by CDK1" evidence="5">
    <location>
        <position position="401"/>
    </location>
</feature>
<feature type="modified residue" description="Phosphothreonine; by CDK1" evidence="5">
    <location>
        <position position="402"/>
    </location>
</feature>
<feature type="modified residue" description="Phosphoserine; by CDK1" evidence="5 14 17">
    <location>
        <position position="618"/>
    </location>
</feature>
<feature type="modified residue" description="Phosphoserine; by AURKA" evidence="6 17">
    <location>
        <position position="627"/>
    </location>
</feature>
<feature type="modified residue" description="Phosphoserine" evidence="17">
    <location>
        <position position="629"/>
    </location>
</feature>
<feature type="modified residue" description="Phosphoserine" evidence="17">
    <location>
        <position position="634"/>
    </location>
</feature>
<feature type="modified residue" description="Phosphothreonine; by CDK1" evidence="5">
    <location>
        <position position="639"/>
    </location>
</feature>
<feature type="modified residue" description="Phosphoserine; by CDK1" evidence="5">
    <location>
        <position position="642"/>
    </location>
</feature>
<feature type="modified residue" description="Phosphoserine" evidence="14 15 16 17">
    <location>
        <position position="662"/>
    </location>
</feature>
<feature type="modified residue" description="Phosphoserine; by AURKA" evidence="6 14 15 17">
    <location>
        <position position="725"/>
    </location>
</feature>
<feature type="modified residue" description="Phosphoserine; by AURKA" evidence="6">
    <location>
        <position position="757"/>
    </location>
</feature>
<feature type="modified residue" description="Phosphothreonine; by CDK1" evidence="5">
    <location>
        <position position="759"/>
    </location>
</feature>
<feature type="modified residue" description="Phosphoserine" evidence="17">
    <location>
        <position position="774"/>
    </location>
</feature>
<feature type="modified residue" description="Phosphoserine" evidence="12 15 16 17">
    <location>
        <position position="777"/>
    </location>
</feature>
<feature type="modified residue" description="Phosphothreonine" evidence="14">
    <location>
        <position position="784"/>
    </location>
</feature>
<feature type="modified residue" description="Phosphoserine" evidence="13 14 17">
    <location>
        <position position="806"/>
    </location>
</feature>
<feature type="modified residue" description="Phosphoserine" evidence="13 14">
    <location>
        <position position="812"/>
    </location>
</feature>
<feature type="modified residue" description="Phosphoserine; by AURKA" evidence="6 15">
    <location>
        <position position="830"/>
    </location>
</feature>
<feature type="modified residue" description="Phosphoserine; by CDK1" evidence="5 15">
    <location>
        <position position="839"/>
    </location>
</feature>
<feature type="cross-link" description="Glycyl lysine isopeptide (Lys-Gly) (interchain with G-Cter in SUMO2)" evidence="18">
    <location>
        <position position="347"/>
    </location>
</feature>
<feature type="splice variant" id="VSP_015550" description="In isoform 2." evidence="8">
    <location>
        <begin position="1"/>
        <end position="81"/>
    </location>
</feature>
<feature type="splice variant" id="VSP_045341" description="In isoform 3." evidence="7">
    <original>PGLNCSNPFTQLERRHQEHARHISFGGNLITFSPLQPGEF</original>
    <variation>VGSCYVARAGLEVLGSSDPTTSASRVAGTTARSKLQ</variation>
    <location>
        <begin position="807"/>
        <end position="846"/>
    </location>
</feature>
<feature type="sequence variant" id="VAR_023774" description="In dbSNP:rs2274271." evidence="3">
    <original>G</original>
    <variation>E</variation>
    <location>
        <position position="69"/>
    </location>
</feature>
<feature type="sequence variant" id="VAR_057718" description="In dbSNP:rs8010791.">
    <original>Q</original>
    <variation>H</variation>
    <location>
        <position position="324"/>
    </location>
</feature>
<feature type="sequence variant" id="VAR_057719" description="In dbSNP:rs17128275.">
    <original>T</original>
    <variation>I</variation>
    <location>
        <position position="469"/>
    </location>
</feature>
<feature type="sequence variant" id="VAR_062147" description="In dbSNP:rs35954941.">
    <original>E</original>
    <variation>Q</variation>
    <location>
        <position position="753"/>
    </location>
</feature>
<feature type="sequence conflict" description="In Ref. 2; BAA02797." evidence="9" ref="2">
    <original>E</original>
    <variation>K</variation>
    <location>
        <position position="253"/>
    </location>
</feature>
<feature type="sequence conflict" description="In Ref. 6; BAG61340." evidence="9" ref="6">
    <original>M</original>
    <variation>T</variation>
    <location>
        <position position="328"/>
    </location>
</feature>
<feature type="helix" evidence="19">
    <location>
        <begin position="88"/>
        <end position="113"/>
    </location>
</feature>